<sequence length="239" mass="27201">MAHITRFETPWFLVISKKQYKWTVRPNAGPHPIEKSIPLAVVIRDYLKLAETVREAKHIIFDGKVLVDGKVRKDYKYPVGLMDIVSIPSADLYFRVIPDNVRFMRLSKISADEAHYKYVRIMNKTTVKGGSIQLNLEDGRNILVDKETAKSFKTLMTLKIELPSQNIVDSFIISEGSYAIFVGGKNVGIHGVVKNINLSKFKSRKYSVITLESKDGNTYQTNLMNVMSIGREKSDMRVD</sequence>
<feature type="chain" id="PRO_1000206440" description="Small ribosomal subunit protein eS4">
    <location>
        <begin position="1"/>
        <end position="239"/>
    </location>
</feature>
<feature type="domain" description="S4 RNA-binding" evidence="1">
    <location>
        <begin position="37"/>
        <end position="99"/>
    </location>
</feature>
<proteinExistence type="inferred from homology"/>
<accession>C3MVJ0</accession>
<name>RS4E_SACI4</name>
<protein>
    <recommendedName>
        <fullName evidence="1">Small ribosomal subunit protein eS4</fullName>
    </recommendedName>
    <alternativeName>
        <fullName evidence="2">30S ribosomal protein S4e</fullName>
    </alternativeName>
</protein>
<keyword id="KW-0687">Ribonucleoprotein</keyword>
<keyword id="KW-0689">Ribosomal protein</keyword>
<keyword id="KW-0694">RNA-binding</keyword>
<keyword id="KW-0699">rRNA-binding</keyword>
<organism>
    <name type="scientific">Saccharolobus islandicus (strain M.14.25 / Kamchatka #1)</name>
    <name type="common">Sulfolobus islandicus</name>
    <dbReference type="NCBI Taxonomy" id="427317"/>
    <lineage>
        <taxon>Archaea</taxon>
        <taxon>Thermoproteota</taxon>
        <taxon>Thermoprotei</taxon>
        <taxon>Sulfolobales</taxon>
        <taxon>Sulfolobaceae</taxon>
        <taxon>Saccharolobus</taxon>
    </lineage>
</organism>
<reference key="1">
    <citation type="journal article" date="2009" name="Proc. Natl. Acad. Sci. U.S.A.">
        <title>Biogeography of the Sulfolobus islandicus pan-genome.</title>
        <authorList>
            <person name="Reno M.L."/>
            <person name="Held N.L."/>
            <person name="Fields C.J."/>
            <person name="Burke P.V."/>
            <person name="Whitaker R.J."/>
        </authorList>
    </citation>
    <scope>NUCLEOTIDE SEQUENCE [LARGE SCALE GENOMIC DNA]</scope>
    <source>
        <strain>M.14.25 / Kamchatka #1</strain>
    </source>
</reference>
<dbReference type="EMBL" id="CP001400">
    <property type="protein sequence ID" value="ACP38185.1"/>
    <property type="molecule type" value="Genomic_DNA"/>
</dbReference>
<dbReference type="RefSeq" id="WP_012711430.1">
    <property type="nucleotide sequence ID" value="NC_012588.1"/>
</dbReference>
<dbReference type="SMR" id="C3MVJ0"/>
<dbReference type="KEGG" id="sia:M1425_1432"/>
<dbReference type="HOGENOM" id="CLU_060400_0_0_2"/>
<dbReference type="Proteomes" id="UP000001350">
    <property type="component" value="Chromosome"/>
</dbReference>
<dbReference type="GO" id="GO:0022627">
    <property type="term" value="C:cytosolic small ribosomal subunit"/>
    <property type="evidence" value="ECO:0007669"/>
    <property type="project" value="TreeGrafter"/>
</dbReference>
<dbReference type="GO" id="GO:0019843">
    <property type="term" value="F:rRNA binding"/>
    <property type="evidence" value="ECO:0007669"/>
    <property type="project" value="UniProtKB-KW"/>
</dbReference>
<dbReference type="GO" id="GO:0003735">
    <property type="term" value="F:structural constituent of ribosome"/>
    <property type="evidence" value="ECO:0007669"/>
    <property type="project" value="InterPro"/>
</dbReference>
<dbReference type="GO" id="GO:0006412">
    <property type="term" value="P:translation"/>
    <property type="evidence" value="ECO:0007669"/>
    <property type="project" value="UniProtKB-UniRule"/>
</dbReference>
<dbReference type="CDD" id="cd06087">
    <property type="entry name" value="KOW_RPS4"/>
    <property type="match status" value="1"/>
</dbReference>
<dbReference type="CDD" id="cd00165">
    <property type="entry name" value="S4"/>
    <property type="match status" value="1"/>
</dbReference>
<dbReference type="FunFam" id="2.30.30.30:FF:000069">
    <property type="entry name" value="30S ribosomal protein S4e"/>
    <property type="match status" value="1"/>
</dbReference>
<dbReference type="FunFam" id="3.10.290.10:FF:000002">
    <property type="entry name" value="40S ribosomal protein S4"/>
    <property type="match status" value="1"/>
</dbReference>
<dbReference type="Gene3D" id="2.30.30.30">
    <property type="match status" value="1"/>
</dbReference>
<dbReference type="Gene3D" id="2.40.50.740">
    <property type="match status" value="1"/>
</dbReference>
<dbReference type="Gene3D" id="3.10.290.10">
    <property type="entry name" value="RNA-binding S4 domain"/>
    <property type="match status" value="1"/>
</dbReference>
<dbReference type="HAMAP" id="MF_00485">
    <property type="entry name" value="Ribosomal_eS4"/>
    <property type="match status" value="1"/>
</dbReference>
<dbReference type="InterPro" id="IPR014722">
    <property type="entry name" value="Rib_uL2_dom2"/>
</dbReference>
<dbReference type="InterPro" id="IPR000876">
    <property type="entry name" value="Ribosomal_eS4"/>
</dbReference>
<dbReference type="InterPro" id="IPR013845">
    <property type="entry name" value="Ribosomal_eS4_central_region"/>
</dbReference>
<dbReference type="InterPro" id="IPR038237">
    <property type="entry name" value="Ribosomal_eS4_central_sf"/>
</dbReference>
<dbReference type="InterPro" id="IPR041982">
    <property type="entry name" value="Ribosomal_eS4_KOW"/>
</dbReference>
<dbReference type="InterPro" id="IPR002942">
    <property type="entry name" value="S4_RNA-bd"/>
</dbReference>
<dbReference type="InterPro" id="IPR036986">
    <property type="entry name" value="S4_RNA-bd_sf"/>
</dbReference>
<dbReference type="NCBIfam" id="NF003312">
    <property type="entry name" value="PRK04313.1"/>
    <property type="match status" value="1"/>
</dbReference>
<dbReference type="PANTHER" id="PTHR11581">
    <property type="entry name" value="30S/40S RIBOSOMAL PROTEIN S4"/>
    <property type="match status" value="1"/>
</dbReference>
<dbReference type="PANTHER" id="PTHR11581:SF0">
    <property type="entry name" value="SMALL RIBOSOMAL SUBUNIT PROTEIN ES4"/>
    <property type="match status" value="1"/>
</dbReference>
<dbReference type="Pfam" id="PF00900">
    <property type="entry name" value="Ribosomal_S4e"/>
    <property type="match status" value="1"/>
</dbReference>
<dbReference type="Pfam" id="PF01479">
    <property type="entry name" value="S4"/>
    <property type="match status" value="1"/>
</dbReference>
<dbReference type="PIRSF" id="PIRSF002116">
    <property type="entry name" value="Ribosomal_S4"/>
    <property type="match status" value="1"/>
</dbReference>
<dbReference type="SMART" id="SM00363">
    <property type="entry name" value="S4"/>
    <property type="match status" value="1"/>
</dbReference>
<dbReference type="SUPFAM" id="SSF55174">
    <property type="entry name" value="Alpha-L RNA-binding motif"/>
    <property type="match status" value="1"/>
</dbReference>
<dbReference type="PROSITE" id="PS50889">
    <property type="entry name" value="S4"/>
    <property type="match status" value="1"/>
</dbReference>
<gene>
    <name evidence="1" type="primary">rps4e</name>
    <name type="ordered locus">M1425_1432</name>
</gene>
<evidence type="ECO:0000255" key="1">
    <source>
        <dbReference type="HAMAP-Rule" id="MF_00485"/>
    </source>
</evidence>
<evidence type="ECO:0000305" key="2"/>
<comment type="similarity">
    <text evidence="1">Belongs to the eukaryotic ribosomal protein eS4 family.</text>
</comment>